<dbReference type="EC" id="5.2.1.8" evidence="1"/>
<dbReference type="EMBL" id="AE017355">
    <property type="protein sequence ID" value="AAT63716.1"/>
    <property type="molecule type" value="Genomic_DNA"/>
</dbReference>
<dbReference type="RefSeq" id="WP_000729253.1">
    <property type="nucleotide sequence ID" value="NC_005957.1"/>
</dbReference>
<dbReference type="RefSeq" id="YP_038523.1">
    <property type="nucleotide sequence ID" value="NC_005957.1"/>
</dbReference>
<dbReference type="SMR" id="Q6HD53"/>
<dbReference type="GeneID" id="45024345"/>
<dbReference type="KEGG" id="btk:BT9727_4206"/>
<dbReference type="PATRIC" id="fig|281309.8.peg.4484"/>
<dbReference type="HOGENOM" id="CLU_033058_3_2_9"/>
<dbReference type="Proteomes" id="UP000001301">
    <property type="component" value="Chromosome"/>
</dbReference>
<dbReference type="GO" id="GO:0005737">
    <property type="term" value="C:cytoplasm"/>
    <property type="evidence" value="ECO:0007669"/>
    <property type="project" value="UniProtKB-SubCell"/>
</dbReference>
<dbReference type="GO" id="GO:0003755">
    <property type="term" value="F:peptidyl-prolyl cis-trans isomerase activity"/>
    <property type="evidence" value="ECO:0007669"/>
    <property type="project" value="UniProtKB-UniRule"/>
</dbReference>
<dbReference type="GO" id="GO:0044183">
    <property type="term" value="F:protein folding chaperone"/>
    <property type="evidence" value="ECO:0007669"/>
    <property type="project" value="TreeGrafter"/>
</dbReference>
<dbReference type="GO" id="GO:0043022">
    <property type="term" value="F:ribosome binding"/>
    <property type="evidence" value="ECO:0007669"/>
    <property type="project" value="TreeGrafter"/>
</dbReference>
<dbReference type="GO" id="GO:0051083">
    <property type="term" value="P:'de novo' cotranslational protein folding"/>
    <property type="evidence" value="ECO:0007669"/>
    <property type="project" value="TreeGrafter"/>
</dbReference>
<dbReference type="GO" id="GO:0051301">
    <property type="term" value="P:cell division"/>
    <property type="evidence" value="ECO:0007669"/>
    <property type="project" value="UniProtKB-KW"/>
</dbReference>
<dbReference type="GO" id="GO:0061077">
    <property type="term" value="P:chaperone-mediated protein folding"/>
    <property type="evidence" value="ECO:0007669"/>
    <property type="project" value="TreeGrafter"/>
</dbReference>
<dbReference type="GO" id="GO:0015031">
    <property type="term" value="P:protein transport"/>
    <property type="evidence" value="ECO:0007669"/>
    <property type="project" value="UniProtKB-UniRule"/>
</dbReference>
<dbReference type="GO" id="GO:0043335">
    <property type="term" value="P:protein unfolding"/>
    <property type="evidence" value="ECO:0007669"/>
    <property type="project" value="TreeGrafter"/>
</dbReference>
<dbReference type="FunFam" id="3.10.50.40:FF:000001">
    <property type="entry name" value="Trigger factor"/>
    <property type="match status" value="1"/>
</dbReference>
<dbReference type="FunFam" id="3.30.70.1050:FF:000002">
    <property type="entry name" value="Trigger factor"/>
    <property type="match status" value="1"/>
</dbReference>
<dbReference type="Gene3D" id="3.10.50.40">
    <property type="match status" value="1"/>
</dbReference>
<dbReference type="Gene3D" id="3.30.70.1050">
    <property type="entry name" value="Trigger factor ribosome-binding domain"/>
    <property type="match status" value="1"/>
</dbReference>
<dbReference type="Gene3D" id="1.10.3120.10">
    <property type="entry name" value="Trigger factor, C-terminal domain"/>
    <property type="match status" value="1"/>
</dbReference>
<dbReference type="HAMAP" id="MF_00303">
    <property type="entry name" value="Trigger_factor_Tig"/>
    <property type="match status" value="1"/>
</dbReference>
<dbReference type="InterPro" id="IPR046357">
    <property type="entry name" value="PPIase_dom_sf"/>
</dbReference>
<dbReference type="InterPro" id="IPR001179">
    <property type="entry name" value="PPIase_FKBP_dom"/>
</dbReference>
<dbReference type="InterPro" id="IPR005215">
    <property type="entry name" value="Trig_fac"/>
</dbReference>
<dbReference type="InterPro" id="IPR008880">
    <property type="entry name" value="Trigger_fac_C"/>
</dbReference>
<dbReference type="InterPro" id="IPR037041">
    <property type="entry name" value="Trigger_fac_C_sf"/>
</dbReference>
<dbReference type="InterPro" id="IPR008881">
    <property type="entry name" value="Trigger_fac_ribosome-bd_bac"/>
</dbReference>
<dbReference type="InterPro" id="IPR036611">
    <property type="entry name" value="Trigger_fac_ribosome-bd_sf"/>
</dbReference>
<dbReference type="InterPro" id="IPR027304">
    <property type="entry name" value="Trigger_fact/SurA_dom_sf"/>
</dbReference>
<dbReference type="NCBIfam" id="TIGR00115">
    <property type="entry name" value="tig"/>
    <property type="match status" value="1"/>
</dbReference>
<dbReference type="PANTHER" id="PTHR30560">
    <property type="entry name" value="TRIGGER FACTOR CHAPERONE AND PEPTIDYL-PROLYL CIS/TRANS ISOMERASE"/>
    <property type="match status" value="1"/>
</dbReference>
<dbReference type="PANTHER" id="PTHR30560:SF3">
    <property type="entry name" value="TRIGGER FACTOR-LIKE PROTEIN TIG, CHLOROPLASTIC"/>
    <property type="match status" value="1"/>
</dbReference>
<dbReference type="Pfam" id="PF00254">
    <property type="entry name" value="FKBP_C"/>
    <property type="match status" value="1"/>
</dbReference>
<dbReference type="Pfam" id="PF05698">
    <property type="entry name" value="Trigger_C"/>
    <property type="match status" value="1"/>
</dbReference>
<dbReference type="Pfam" id="PF05697">
    <property type="entry name" value="Trigger_N"/>
    <property type="match status" value="1"/>
</dbReference>
<dbReference type="PIRSF" id="PIRSF003095">
    <property type="entry name" value="Trigger_factor"/>
    <property type="match status" value="1"/>
</dbReference>
<dbReference type="SUPFAM" id="SSF54534">
    <property type="entry name" value="FKBP-like"/>
    <property type="match status" value="1"/>
</dbReference>
<dbReference type="SUPFAM" id="SSF109998">
    <property type="entry name" value="Triger factor/SurA peptide-binding domain-like"/>
    <property type="match status" value="1"/>
</dbReference>
<dbReference type="SUPFAM" id="SSF102735">
    <property type="entry name" value="Trigger factor ribosome-binding domain"/>
    <property type="match status" value="1"/>
</dbReference>
<dbReference type="PROSITE" id="PS50059">
    <property type="entry name" value="FKBP_PPIASE"/>
    <property type="match status" value="1"/>
</dbReference>
<sequence>MAAKWEKLEGNVGVLTIEVDAKEVNNSIDAAFKKVVKTINVPGFRKGKMPRPLFEQRFGIESLYQDALDIILPKAYGEAIDEAGIFPVAHPEIDIEKFEKNANLIFTAKVTVKPEVKLGEYKGLAVEKVETTVTDEDVENELKSLQERQAELVVKEEGTVENGDTAVIDFEGFVDGEAFEGGKGENYSLAIGSGTFIPGFEEQVIGLKSGESKDVEVSFPEEYHAAELAGKPATFKVTVHEIKTKELPELNDEFAKEADEAVATLDELKAKLRTNLEEGKKHEAEHKVRDEVVELAAANAEIDIPEAMIDTELDRMVREFEQRLSQQGMNLELYYQFTGTDADKLKEQMKEDAQKRVRINLVLEAIIEAENIEVTEEEVTAEVEKMAEMYGMPVDAIKQALGSVDALAEDLKVRKAVDFLVENAA</sequence>
<organism>
    <name type="scientific">Bacillus thuringiensis subsp. konkukian (strain 97-27)</name>
    <dbReference type="NCBI Taxonomy" id="281309"/>
    <lineage>
        <taxon>Bacteria</taxon>
        <taxon>Bacillati</taxon>
        <taxon>Bacillota</taxon>
        <taxon>Bacilli</taxon>
        <taxon>Bacillales</taxon>
        <taxon>Bacillaceae</taxon>
        <taxon>Bacillus</taxon>
        <taxon>Bacillus cereus group</taxon>
    </lineage>
</organism>
<reference key="1">
    <citation type="journal article" date="2006" name="J. Bacteriol.">
        <title>Pathogenomic sequence analysis of Bacillus cereus and Bacillus thuringiensis isolates closely related to Bacillus anthracis.</title>
        <authorList>
            <person name="Han C.S."/>
            <person name="Xie G."/>
            <person name="Challacombe J.F."/>
            <person name="Altherr M.R."/>
            <person name="Bhotika S.S."/>
            <person name="Bruce D."/>
            <person name="Campbell C.S."/>
            <person name="Campbell M.L."/>
            <person name="Chen J."/>
            <person name="Chertkov O."/>
            <person name="Cleland C."/>
            <person name="Dimitrijevic M."/>
            <person name="Doggett N.A."/>
            <person name="Fawcett J.J."/>
            <person name="Glavina T."/>
            <person name="Goodwin L.A."/>
            <person name="Hill K.K."/>
            <person name="Hitchcock P."/>
            <person name="Jackson P.J."/>
            <person name="Keim P."/>
            <person name="Kewalramani A.R."/>
            <person name="Longmire J."/>
            <person name="Lucas S."/>
            <person name="Malfatti S."/>
            <person name="McMurry K."/>
            <person name="Meincke L.J."/>
            <person name="Misra M."/>
            <person name="Moseman B.L."/>
            <person name="Mundt M."/>
            <person name="Munk A.C."/>
            <person name="Okinaka R.T."/>
            <person name="Parson-Quintana B."/>
            <person name="Reilly L.P."/>
            <person name="Richardson P."/>
            <person name="Robinson D.L."/>
            <person name="Rubin E."/>
            <person name="Saunders E."/>
            <person name="Tapia R."/>
            <person name="Tesmer J.G."/>
            <person name="Thayer N."/>
            <person name="Thompson L.S."/>
            <person name="Tice H."/>
            <person name="Ticknor L.O."/>
            <person name="Wills P.L."/>
            <person name="Brettin T.S."/>
            <person name="Gilna P."/>
        </authorList>
    </citation>
    <scope>NUCLEOTIDE SEQUENCE [LARGE SCALE GENOMIC DNA]</scope>
    <source>
        <strain>97-27</strain>
    </source>
</reference>
<accession>Q6HD53</accession>
<evidence type="ECO:0000255" key="1">
    <source>
        <dbReference type="HAMAP-Rule" id="MF_00303"/>
    </source>
</evidence>
<proteinExistence type="inferred from homology"/>
<feature type="chain" id="PRO_0000179310" description="Trigger factor">
    <location>
        <begin position="1"/>
        <end position="425"/>
    </location>
</feature>
<feature type="domain" description="PPIase FKBP-type" evidence="1">
    <location>
        <begin position="163"/>
        <end position="248"/>
    </location>
</feature>
<keyword id="KW-0131">Cell cycle</keyword>
<keyword id="KW-0132">Cell division</keyword>
<keyword id="KW-0143">Chaperone</keyword>
<keyword id="KW-0963">Cytoplasm</keyword>
<keyword id="KW-0413">Isomerase</keyword>
<keyword id="KW-0697">Rotamase</keyword>
<comment type="function">
    <text evidence="1">Involved in protein export. Acts as a chaperone by maintaining the newly synthesized protein in an open conformation. Functions as a peptidyl-prolyl cis-trans isomerase.</text>
</comment>
<comment type="catalytic activity">
    <reaction evidence="1">
        <text>[protein]-peptidylproline (omega=180) = [protein]-peptidylproline (omega=0)</text>
        <dbReference type="Rhea" id="RHEA:16237"/>
        <dbReference type="Rhea" id="RHEA-COMP:10747"/>
        <dbReference type="Rhea" id="RHEA-COMP:10748"/>
        <dbReference type="ChEBI" id="CHEBI:83833"/>
        <dbReference type="ChEBI" id="CHEBI:83834"/>
        <dbReference type="EC" id="5.2.1.8"/>
    </reaction>
</comment>
<comment type="subcellular location">
    <subcellularLocation>
        <location>Cytoplasm</location>
    </subcellularLocation>
    <text evidence="1">About half TF is bound to the ribosome near the polypeptide exit tunnel while the other half is free in the cytoplasm.</text>
</comment>
<comment type="domain">
    <text evidence="1">Consists of 3 domains; the N-terminus binds the ribosome, the middle domain has PPIase activity, while the C-terminus has intrinsic chaperone activity on its own.</text>
</comment>
<comment type="similarity">
    <text evidence="1">Belongs to the FKBP-type PPIase family. Tig subfamily.</text>
</comment>
<name>TIG_BACHK</name>
<gene>
    <name evidence="1" type="primary">tig</name>
    <name type="ordered locus">BT9727_4206</name>
</gene>
<protein>
    <recommendedName>
        <fullName evidence="1">Trigger factor</fullName>
        <shortName evidence="1">TF</shortName>
        <ecNumber evidence="1">5.2.1.8</ecNumber>
    </recommendedName>
    <alternativeName>
        <fullName evidence="1">PPIase</fullName>
    </alternativeName>
</protein>